<evidence type="ECO:0000250" key="1">
    <source>
        <dbReference type="UniProtKB" id="Q7B8B9"/>
    </source>
</evidence>
<evidence type="ECO:0000269" key="2">
    <source>
    </source>
</evidence>
<evidence type="ECO:0000303" key="3">
    <source>
    </source>
</evidence>
<evidence type="ECO:0000305" key="4"/>
<evidence type="ECO:0000312" key="5">
    <source>
        <dbReference type="EMBL" id="CAJ84442.1"/>
    </source>
</evidence>
<dbReference type="EC" id="3.1.1.81"/>
<dbReference type="EMBL" id="AM235210">
    <property type="protein sequence ID" value="CAJ84442.1"/>
    <property type="molecule type" value="Genomic_DNA"/>
</dbReference>
<dbReference type="SMR" id="Q08GP4"/>
<dbReference type="eggNOG" id="COG0491">
    <property type="taxonomic scope" value="Bacteria"/>
</dbReference>
<dbReference type="GO" id="GO:0102007">
    <property type="term" value="F:acyl-L-homoserine-lactone lactonohydrolase activity"/>
    <property type="evidence" value="ECO:0007669"/>
    <property type="project" value="UniProtKB-EC"/>
</dbReference>
<dbReference type="GO" id="GO:0046872">
    <property type="term" value="F:metal ion binding"/>
    <property type="evidence" value="ECO:0007669"/>
    <property type="project" value="UniProtKB-KW"/>
</dbReference>
<dbReference type="CDD" id="cd07729">
    <property type="entry name" value="AHL_lactonase_MBL-fold"/>
    <property type="match status" value="1"/>
</dbReference>
<dbReference type="FunFam" id="3.60.15.10:FF:000060">
    <property type="entry name" value="N-acyl homoserine lactonase AiiA"/>
    <property type="match status" value="1"/>
</dbReference>
<dbReference type="Gene3D" id="3.60.15.10">
    <property type="entry name" value="Ribonuclease Z/Hydroxyacylglutathione hydrolase-like"/>
    <property type="match status" value="1"/>
</dbReference>
<dbReference type="InterPro" id="IPR054870">
    <property type="entry name" value="AHLLactAiiA"/>
</dbReference>
<dbReference type="InterPro" id="IPR051013">
    <property type="entry name" value="MBL_superfamily_lactonases"/>
</dbReference>
<dbReference type="InterPro" id="IPR001279">
    <property type="entry name" value="Metallo-B-lactamas"/>
</dbReference>
<dbReference type="InterPro" id="IPR036866">
    <property type="entry name" value="RibonucZ/Hydroxyglut_hydro"/>
</dbReference>
<dbReference type="NCBIfam" id="NF045699">
    <property type="entry name" value="AHLLactAiiA"/>
    <property type="match status" value="1"/>
</dbReference>
<dbReference type="PANTHER" id="PTHR42978:SF7">
    <property type="entry name" value="METALLO-HYDROLASE RV2300C-RELATED"/>
    <property type="match status" value="1"/>
</dbReference>
<dbReference type="PANTHER" id="PTHR42978">
    <property type="entry name" value="QUORUM-QUENCHING LACTONASE YTNP-RELATED-RELATED"/>
    <property type="match status" value="1"/>
</dbReference>
<dbReference type="Pfam" id="PF00753">
    <property type="entry name" value="Lactamase_B"/>
    <property type="match status" value="1"/>
</dbReference>
<dbReference type="SMART" id="SM00849">
    <property type="entry name" value="Lactamase_B"/>
    <property type="match status" value="1"/>
</dbReference>
<dbReference type="SUPFAM" id="SSF56281">
    <property type="entry name" value="Metallo-hydrolase/oxidoreductase"/>
    <property type="match status" value="1"/>
</dbReference>
<proteinExistence type="evidence at protein level"/>
<accession>Q08GP4</accession>
<gene>
    <name evidence="5" type="primary">Y2-aiiA</name>
</gene>
<reference evidence="4 5" key="1">
    <citation type="journal article" date="2006" name="Curr. Microbiol.">
        <title>Identification of the critical role of Tyr-194 in the catalytic activity of a novel N-acyl-homoserine lactonase from marine Bacillus cereus strain Y2.</title>
        <authorList>
            <person name="Lu X."/>
            <person name="Yuan Y."/>
            <person name="Xue X.L."/>
            <person name="Zhang G.P."/>
            <person name="Zhou S.N."/>
        </authorList>
    </citation>
    <scope>NUCLEOTIDE SEQUENCE [GENOMIC DNA]</scope>
    <scope>CATALYTIC ACTIVITY</scope>
    <scope>MUTAGENESIS OF TYR-194</scope>
    <source>
        <strain evidence="5">Y2</strain>
    </source>
</reference>
<comment type="catalytic activity">
    <reaction evidence="2">
        <text>an N-acyl-L-homoserine lactone + H2O = an N-acyl-L-homoserine + H(+)</text>
        <dbReference type="Rhea" id="RHEA:22576"/>
        <dbReference type="ChEBI" id="CHEBI:15377"/>
        <dbReference type="ChEBI" id="CHEBI:15378"/>
        <dbReference type="ChEBI" id="CHEBI:55474"/>
        <dbReference type="ChEBI" id="CHEBI:58921"/>
        <dbReference type="EC" id="3.1.1.81"/>
    </reaction>
</comment>
<comment type="cofactor">
    <cofactor evidence="1">
        <name>Zn(2+)</name>
        <dbReference type="ChEBI" id="CHEBI:29105"/>
    </cofactor>
    <text evidence="1">Binds 2 Zn(2+) ions per subunit.</text>
</comment>
<comment type="subunit">
    <text evidence="1">Monomer.</text>
</comment>
<comment type="similarity">
    <text evidence="4">Belongs to the metallo-beta-lactamase superfamily.</text>
</comment>
<feature type="chain" id="PRO_0000403298" description="N-acyl homoserine lactonase">
    <location>
        <begin position="1"/>
        <end position="250"/>
    </location>
</feature>
<feature type="binding site" evidence="1">
    <location>
        <position position="104"/>
    </location>
    <ligand>
        <name>Zn(2+)</name>
        <dbReference type="ChEBI" id="CHEBI:29105"/>
        <label>1</label>
    </ligand>
</feature>
<feature type="binding site" evidence="1">
    <location>
        <position position="106"/>
    </location>
    <ligand>
        <name>Zn(2+)</name>
        <dbReference type="ChEBI" id="CHEBI:29105"/>
        <label>1</label>
    </ligand>
</feature>
<feature type="binding site" evidence="1">
    <location>
        <position position="108"/>
    </location>
    <ligand>
        <name>Zn(2+)</name>
        <dbReference type="ChEBI" id="CHEBI:29105"/>
        <label>2</label>
    </ligand>
</feature>
<feature type="binding site" evidence="1">
    <location>
        <position position="109"/>
    </location>
    <ligand>
        <name>Zn(2+)</name>
        <dbReference type="ChEBI" id="CHEBI:29105"/>
        <label>2</label>
    </ligand>
</feature>
<feature type="binding site" evidence="1">
    <location>
        <position position="169"/>
    </location>
    <ligand>
        <name>Zn(2+)</name>
        <dbReference type="ChEBI" id="CHEBI:29105"/>
        <label>1</label>
    </ligand>
</feature>
<feature type="binding site" evidence="1">
    <location>
        <position position="191"/>
    </location>
    <ligand>
        <name>Zn(2+)</name>
        <dbReference type="ChEBI" id="CHEBI:29105"/>
        <label>1</label>
    </ligand>
</feature>
<feature type="binding site" evidence="1">
    <location>
        <position position="191"/>
    </location>
    <ligand>
        <name>Zn(2+)</name>
        <dbReference type="ChEBI" id="CHEBI:29105"/>
        <label>2</label>
    </ligand>
</feature>
<feature type="binding site" evidence="1">
    <location>
        <position position="235"/>
    </location>
    <ligand>
        <name>Zn(2+)</name>
        <dbReference type="ChEBI" id="CHEBI:29105"/>
        <label>2</label>
    </ligand>
</feature>
<feature type="mutagenesis site" description="Activity decreases significantly." evidence="2">
    <original>Y</original>
    <variation>A</variation>
    <location>
        <position position="194"/>
    </location>
</feature>
<organism>
    <name type="scientific">Bacillus cereus</name>
    <dbReference type="NCBI Taxonomy" id="1396"/>
    <lineage>
        <taxon>Bacteria</taxon>
        <taxon>Bacillati</taxon>
        <taxon>Bacillota</taxon>
        <taxon>Bacilli</taxon>
        <taxon>Bacillales</taxon>
        <taxon>Bacillaceae</taxon>
        <taxon>Bacillus</taxon>
        <taxon>Bacillus cereus group</taxon>
    </lineage>
</organism>
<sequence length="250" mass="28191">MTVKKLYFVPAGRCMLDRSSVNSTLTPGNLLNLPVWCYLLETEEGPILVDTGMPESAVHNENLFEGTFAEGQILPKMTEEDRIVTILKRVGYKPEDLLYIISSHLHFDHAGGNGAFSNTPIIIQRAEYEAAQYREEYLKECILPNLNYKIIEGDYEVVPGVQLLYTPGHSPGHQSLLIETEKSGLVLLTIDASYTKENFEDEVPFAGFDSELALSSIKRLKEVVMKEKPIVFFGHDIEQEKGCKVFPEYI</sequence>
<protein>
    <recommendedName>
        <fullName evidence="3">N-acyl homoserine lactonase</fullName>
        <shortName evidence="3">AHL-lactonase</shortName>
        <ecNumber>3.1.1.81</ecNumber>
    </recommendedName>
    <alternativeName>
        <fullName evidence="5">Quorum-quenching N-acyl-homoserine lactonase</fullName>
    </alternativeName>
</protein>
<name>AHLL_BACCE</name>
<keyword id="KW-0378">Hydrolase</keyword>
<keyword id="KW-0479">Metal-binding</keyword>
<keyword id="KW-0862">Zinc</keyword>